<dbReference type="EC" id="6.1.1.6"/>
<dbReference type="EMBL" id="AE009950">
    <property type="protein sequence ID" value="AAL80259.1"/>
    <property type="molecule type" value="Genomic_DNA"/>
</dbReference>
<dbReference type="RefSeq" id="WP_011011248.1">
    <property type="nucleotide sequence ID" value="NZ_CP023154.1"/>
</dbReference>
<dbReference type="SMR" id="Q8U4F3"/>
<dbReference type="STRING" id="186497.PF0135"/>
<dbReference type="PaxDb" id="186497-PF0135"/>
<dbReference type="GeneID" id="41711925"/>
<dbReference type="KEGG" id="pfu:PF0135"/>
<dbReference type="PATRIC" id="fig|186497.12.peg.141"/>
<dbReference type="eggNOG" id="arCOG00485">
    <property type="taxonomic scope" value="Archaea"/>
</dbReference>
<dbReference type="HOGENOM" id="CLU_025562_1_0_2"/>
<dbReference type="OrthoDB" id="6838at2157"/>
<dbReference type="PhylomeDB" id="Q8U4F3"/>
<dbReference type="Proteomes" id="UP000001013">
    <property type="component" value="Chromosome"/>
</dbReference>
<dbReference type="GO" id="GO:0005737">
    <property type="term" value="C:cytoplasm"/>
    <property type="evidence" value="ECO:0007669"/>
    <property type="project" value="UniProtKB-SubCell"/>
</dbReference>
<dbReference type="GO" id="GO:0005524">
    <property type="term" value="F:ATP binding"/>
    <property type="evidence" value="ECO:0007669"/>
    <property type="project" value="UniProtKB-UniRule"/>
</dbReference>
<dbReference type="GO" id="GO:0004824">
    <property type="term" value="F:lysine-tRNA ligase activity"/>
    <property type="evidence" value="ECO:0007669"/>
    <property type="project" value="UniProtKB-UniRule"/>
</dbReference>
<dbReference type="GO" id="GO:0046872">
    <property type="term" value="F:metal ion binding"/>
    <property type="evidence" value="ECO:0007669"/>
    <property type="project" value="UniProtKB-KW"/>
</dbReference>
<dbReference type="GO" id="GO:0000049">
    <property type="term" value="F:tRNA binding"/>
    <property type="evidence" value="ECO:0007669"/>
    <property type="project" value="InterPro"/>
</dbReference>
<dbReference type="GO" id="GO:0006430">
    <property type="term" value="P:lysyl-tRNA aminoacylation"/>
    <property type="evidence" value="ECO:0007669"/>
    <property type="project" value="UniProtKB-UniRule"/>
</dbReference>
<dbReference type="CDD" id="cd00674">
    <property type="entry name" value="LysRS_core_class_I"/>
    <property type="match status" value="1"/>
</dbReference>
<dbReference type="Gene3D" id="1.10.10.350">
    <property type="match status" value="1"/>
</dbReference>
<dbReference type="Gene3D" id="1.10.10.770">
    <property type="match status" value="1"/>
</dbReference>
<dbReference type="Gene3D" id="3.40.50.620">
    <property type="entry name" value="HUPs"/>
    <property type="match status" value="2"/>
</dbReference>
<dbReference type="Gene3D" id="6.10.20.10">
    <property type="entry name" value="Lysine tRNA ligase, stem contact fold domain"/>
    <property type="match status" value="1"/>
</dbReference>
<dbReference type="HAMAP" id="MF_00177">
    <property type="entry name" value="Lys_tRNA_synth_class1"/>
    <property type="match status" value="1"/>
</dbReference>
<dbReference type="InterPro" id="IPR045462">
    <property type="entry name" value="aa-tRNA-synth_I_cd-bd"/>
</dbReference>
<dbReference type="InterPro" id="IPR020751">
    <property type="entry name" value="aa-tRNA-synth_I_codon-bd_sub2"/>
</dbReference>
<dbReference type="InterPro" id="IPR001412">
    <property type="entry name" value="aa-tRNA-synth_I_CS"/>
</dbReference>
<dbReference type="InterPro" id="IPR008925">
    <property type="entry name" value="aa_tRNA-synth_I_cd-bd_sf"/>
</dbReference>
<dbReference type="InterPro" id="IPR002904">
    <property type="entry name" value="Lys-tRNA-ligase"/>
</dbReference>
<dbReference type="InterPro" id="IPR042078">
    <property type="entry name" value="Lys-tRNA-ligase_SC_fold"/>
</dbReference>
<dbReference type="InterPro" id="IPR014729">
    <property type="entry name" value="Rossmann-like_a/b/a_fold"/>
</dbReference>
<dbReference type="NCBIfam" id="TIGR00467">
    <property type="entry name" value="lysS_arch"/>
    <property type="match status" value="1"/>
</dbReference>
<dbReference type="PANTHER" id="PTHR37940">
    <property type="entry name" value="LYSINE--TRNA LIGASE"/>
    <property type="match status" value="1"/>
</dbReference>
<dbReference type="PANTHER" id="PTHR37940:SF1">
    <property type="entry name" value="LYSINE--TRNA LIGASE"/>
    <property type="match status" value="1"/>
</dbReference>
<dbReference type="Pfam" id="PF19269">
    <property type="entry name" value="Anticodon_2"/>
    <property type="match status" value="1"/>
</dbReference>
<dbReference type="Pfam" id="PF01921">
    <property type="entry name" value="tRNA-synt_1f"/>
    <property type="match status" value="1"/>
</dbReference>
<dbReference type="SUPFAM" id="SSF48163">
    <property type="entry name" value="An anticodon-binding domain of class I aminoacyl-tRNA synthetases"/>
    <property type="match status" value="1"/>
</dbReference>
<dbReference type="SUPFAM" id="SSF52374">
    <property type="entry name" value="Nucleotidylyl transferase"/>
    <property type="match status" value="1"/>
</dbReference>
<dbReference type="PROSITE" id="PS00178">
    <property type="entry name" value="AA_TRNA_LIGASE_I"/>
    <property type="match status" value="1"/>
</dbReference>
<keyword id="KW-0030">Aminoacyl-tRNA synthetase</keyword>
<keyword id="KW-0067">ATP-binding</keyword>
<keyword id="KW-0963">Cytoplasm</keyword>
<keyword id="KW-0436">Ligase</keyword>
<keyword id="KW-0479">Metal-binding</keyword>
<keyword id="KW-0547">Nucleotide-binding</keyword>
<keyword id="KW-0648">Protein biosynthesis</keyword>
<keyword id="KW-1185">Reference proteome</keyword>
<keyword id="KW-0862">Zinc</keyword>
<reference key="1">
    <citation type="journal article" date="1999" name="Genetics">
        <title>Divergence of the hyperthermophilic archaea Pyrococcus furiosus and P. horikoshii inferred from complete genomic sequences.</title>
        <authorList>
            <person name="Maeder D.L."/>
            <person name="Weiss R.B."/>
            <person name="Dunn D.M."/>
            <person name="Cherry J.L."/>
            <person name="Gonzalez J.M."/>
            <person name="DiRuggiero J."/>
            <person name="Robb F.T."/>
        </authorList>
    </citation>
    <scope>NUCLEOTIDE SEQUENCE [LARGE SCALE GENOMIC DNA]</scope>
    <source>
        <strain>ATCC 43587 / DSM 3638 / JCM 8422 / Vc1</strain>
    </source>
</reference>
<sequence>MVHWADYMAEKIIKERGEKEEYVVESGITPSGYVHVGNFRELFTAYIVGHALRDRGYNVRHIHMWDDYDRFRKVPKNVPQEWEEYLGMPVSEVPDPWGCHDSYAEHFMGLFEEEVAKLEMDVEFLRASELYKKGEYAEEIRKAFEAKGKIMAILNKYREVAKQPPLPENWWPAMVYCPEHRKESEIIDWDGEWGVKYRCPEGHEGWTDIRDGNVKLRWRVDWPMRWAHFGVDFEPAGKDHLAAGSSYDTGKEIIREVYGKEAPLTLMYEFVGIKGQKGKMSGSKGNVILLSDLYEVLEPGLVRFIYAKHRPNKEIRIDLGLGLLNLYDEFDRVERIYFGIEKGKGDEEELKRTYELSVPKKPKRLVAQAPFRFLAVLVQLPHLSIEDIIFTLVKQGHVPENLTQEDIDRIKLRIKLAKNWVEKYAPEEVKFKILSVPGVSEVDPTIREAMLEVAEWLESHEDFAVDELNNILFEVAKKRNIPSKVWFSTLYKLFIGKDRGPKLANFLAALDREFVVRRLRLEG</sequence>
<gene>
    <name type="primary">lysS</name>
    <name type="ordered locus">PF0135</name>
</gene>
<protein>
    <recommendedName>
        <fullName>Lysine--tRNA ligase</fullName>
        <ecNumber>6.1.1.6</ecNumber>
    </recommendedName>
    <alternativeName>
        <fullName>Lysyl-tRNA synthetase</fullName>
        <shortName>LysRS</shortName>
    </alternativeName>
</protein>
<feature type="chain" id="PRO_0000152759" description="Lysine--tRNA ligase">
    <location>
        <begin position="1"/>
        <end position="523"/>
    </location>
</feature>
<feature type="short sequence motif" description="'HIGH' region">
    <location>
        <begin position="30"/>
        <end position="38"/>
    </location>
</feature>
<feature type="short sequence motif" description="'KMSKS' region">
    <location>
        <begin position="279"/>
        <end position="283"/>
    </location>
</feature>
<feature type="binding site" evidence="1">
    <location>
        <position position="95"/>
    </location>
    <ligand>
        <name>Zn(2+)</name>
        <dbReference type="ChEBI" id="CHEBI:29105"/>
        <label>1</label>
    </ligand>
</feature>
<feature type="binding site" evidence="1">
    <location>
        <position position="99"/>
    </location>
    <ligand>
        <name>Zn(2+)</name>
        <dbReference type="ChEBI" id="CHEBI:29105"/>
        <label>1</label>
    </ligand>
</feature>
<feature type="binding site" evidence="1">
    <location>
        <position position="100"/>
    </location>
    <ligand>
        <name>Zn(2+)</name>
        <dbReference type="ChEBI" id="CHEBI:29105"/>
        <label>1</label>
    </ligand>
</feature>
<feature type="binding site" evidence="1">
    <location>
        <position position="106"/>
    </location>
    <ligand>
        <name>Zn(2+)</name>
        <dbReference type="ChEBI" id="CHEBI:29105"/>
        <label>1</label>
    </ligand>
</feature>
<feature type="binding site" evidence="1">
    <location>
        <position position="177"/>
    </location>
    <ligand>
        <name>Zn(2+)</name>
        <dbReference type="ChEBI" id="CHEBI:29105"/>
        <label>2</label>
    </ligand>
</feature>
<feature type="binding site" evidence="1">
    <location>
        <position position="180"/>
    </location>
    <ligand>
        <name>Zn(2+)</name>
        <dbReference type="ChEBI" id="CHEBI:29105"/>
        <label>2</label>
    </ligand>
</feature>
<feature type="binding site" evidence="1">
    <location>
        <position position="199"/>
    </location>
    <ligand>
        <name>Zn(2+)</name>
        <dbReference type="ChEBI" id="CHEBI:29105"/>
        <label>2</label>
    </ligand>
</feature>
<feature type="binding site" evidence="1">
    <location>
        <position position="203"/>
    </location>
    <ligand>
        <name>Zn(2+)</name>
        <dbReference type="ChEBI" id="CHEBI:29105"/>
        <label>2</label>
    </ligand>
</feature>
<accession>Q8U4F3</accession>
<name>SYK_PYRFU</name>
<evidence type="ECO:0000250" key="1"/>
<evidence type="ECO:0000305" key="2"/>
<comment type="catalytic activity">
    <reaction>
        <text>tRNA(Lys) + L-lysine + ATP = L-lysyl-tRNA(Lys) + AMP + diphosphate</text>
        <dbReference type="Rhea" id="RHEA:20792"/>
        <dbReference type="Rhea" id="RHEA-COMP:9696"/>
        <dbReference type="Rhea" id="RHEA-COMP:9697"/>
        <dbReference type="ChEBI" id="CHEBI:30616"/>
        <dbReference type="ChEBI" id="CHEBI:32551"/>
        <dbReference type="ChEBI" id="CHEBI:33019"/>
        <dbReference type="ChEBI" id="CHEBI:78442"/>
        <dbReference type="ChEBI" id="CHEBI:78529"/>
        <dbReference type="ChEBI" id="CHEBI:456215"/>
        <dbReference type="EC" id="6.1.1.6"/>
    </reaction>
</comment>
<comment type="cofactor">
    <cofactor evidence="1">
        <name>Zn(2+)</name>
        <dbReference type="ChEBI" id="CHEBI:29105"/>
    </cofactor>
    <text evidence="1">Binds 2 Zn(2+) ions per subunit.</text>
</comment>
<comment type="subcellular location">
    <subcellularLocation>
        <location evidence="1">Cytoplasm</location>
    </subcellularLocation>
</comment>
<comment type="similarity">
    <text evidence="2">Belongs to the class-I aminoacyl-tRNA synthetase family.</text>
</comment>
<organism>
    <name type="scientific">Pyrococcus furiosus (strain ATCC 43587 / DSM 3638 / JCM 8422 / Vc1)</name>
    <dbReference type="NCBI Taxonomy" id="186497"/>
    <lineage>
        <taxon>Archaea</taxon>
        <taxon>Methanobacteriati</taxon>
        <taxon>Methanobacteriota</taxon>
        <taxon>Thermococci</taxon>
        <taxon>Thermococcales</taxon>
        <taxon>Thermococcaceae</taxon>
        <taxon>Pyrococcus</taxon>
    </lineage>
</organism>
<proteinExistence type="inferred from homology"/>